<accession>A0KFC0</accession>
<reference key="1">
    <citation type="journal article" date="2006" name="J. Bacteriol.">
        <title>Genome sequence of Aeromonas hydrophila ATCC 7966T: jack of all trades.</title>
        <authorList>
            <person name="Seshadri R."/>
            <person name="Joseph S.W."/>
            <person name="Chopra A.K."/>
            <person name="Sha J."/>
            <person name="Shaw J."/>
            <person name="Graf J."/>
            <person name="Haft D.H."/>
            <person name="Wu M."/>
            <person name="Ren Q."/>
            <person name="Rosovitz M.J."/>
            <person name="Madupu R."/>
            <person name="Tallon L."/>
            <person name="Kim M."/>
            <person name="Jin S."/>
            <person name="Vuong H."/>
            <person name="Stine O.C."/>
            <person name="Ali A."/>
            <person name="Horneman A.J."/>
            <person name="Heidelberg J.F."/>
        </authorList>
    </citation>
    <scope>NUCLEOTIDE SEQUENCE [LARGE SCALE GENOMIC DNA]</scope>
    <source>
        <strain>ATCC 7966 / DSM 30187 / BCRC 13018 / CCUG 14551 / JCM 1027 / KCTC 2358 / NCIMB 9240 / NCTC 8049</strain>
    </source>
</reference>
<gene>
    <name evidence="1" type="primary">murQ</name>
    <name type="ordered locus">AHA_0413</name>
</gene>
<dbReference type="EC" id="4.2.1.126" evidence="1"/>
<dbReference type="EMBL" id="CP000462">
    <property type="protein sequence ID" value="ABK36652.1"/>
    <property type="molecule type" value="Genomic_DNA"/>
</dbReference>
<dbReference type="RefSeq" id="WP_011704387.1">
    <property type="nucleotide sequence ID" value="NC_008570.1"/>
</dbReference>
<dbReference type="RefSeq" id="YP_854942.1">
    <property type="nucleotide sequence ID" value="NC_008570.1"/>
</dbReference>
<dbReference type="SMR" id="A0KFC0"/>
<dbReference type="STRING" id="380703.AHA_0413"/>
<dbReference type="EnsemblBacteria" id="ABK36652">
    <property type="protein sequence ID" value="ABK36652"/>
    <property type="gene ID" value="AHA_0413"/>
</dbReference>
<dbReference type="GeneID" id="4487211"/>
<dbReference type="KEGG" id="aha:AHA_0413"/>
<dbReference type="PATRIC" id="fig|380703.7.peg.402"/>
<dbReference type="eggNOG" id="COG2103">
    <property type="taxonomic scope" value="Bacteria"/>
</dbReference>
<dbReference type="HOGENOM" id="CLU_049049_1_1_6"/>
<dbReference type="OrthoDB" id="9813395at2"/>
<dbReference type="UniPathway" id="UPA00342"/>
<dbReference type="UniPathway" id="UPA00343"/>
<dbReference type="UniPathway" id="UPA00544"/>
<dbReference type="Proteomes" id="UP000000756">
    <property type="component" value="Chromosome"/>
</dbReference>
<dbReference type="GO" id="GO:0097367">
    <property type="term" value="F:carbohydrate derivative binding"/>
    <property type="evidence" value="ECO:0007669"/>
    <property type="project" value="InterPro"/>
</dbReference>
<dbReference type="GO" id="GO:0016835">
    <property type="term" value="F:carbon-oxygen lyase activity"/>
    <property type="evidence" value="ECO:0007669"/>
    <property type="project" value="UniProtKB-UniRule"/>
</dbReference>
<dbReference type="GO" id="GO:0016803">
    <property type="term" value="F:ether hydrolase activity"/>
    <property type="evidence" value="ECO:0007669"/>
    <property type="project" value="TreeGrafter"/>
</dbReference>
<dbReference type="GO" id="GO:0097175">
    <property type="term" value="P:1,6-anhydro-N-acetyl-beta-muramic acid catabolic process"/>
    <property type="evidence" value="ECO:0007669"/>
    <property type="project" value="UniProtKB-UniRule"/>
</dbReference>
<dbReference type="GO" id="GO:0046348">
    <property type="term" value="P:amino sugar catabolic process"/>
    <property type="evidence" value="ECO:0007669"/>
    <property type="project" value="InterPro"/>
</dbReference>
<dbReference type="GO" id="GO:0097173">
    <property type="term" value="P:N-acetylmuramic acid catabolic process"/>
    <property type="evidence" value="ECO:0007669"/>
    <property type="project" value="UniProtKB-UniPathway"/>
</dbReference>
<dbReference type="GO" id="GO:0009254">
    <property type="term" value="P:peptidoglycan turnover"/>
    <property type="evidence" value="ECO:0007669"/>
    <property type="project" value="UniProtKB-UniRule"/>
</dbReference>
<dbReference type="CDD" id="cd05007">
    <property type="entry name" value="SIS_Etherase"/>
    <property type="match status" value="1"/>
</dbReference>
<dbReference type="FunFam" id="1.10.8.1080:FF:000001">
    <property type="entry name" value="N-acetylmuramic acid 6-phosphate etherase"/>
    <property type="match status" value="1"/>
</dbReference>
<dbReference type="FunFam" id="3.40.50.10490:FF:000014">
    <property type="entry name" value="N-acetylmuramic acid 6-phosphate etherase"/>
    <property type="match status" value="1"/>
</dbReference>
<dbReference type="Gene3D" id="1.10.8.1080">
    <property type="match status" value="1"/>
</dbReference>
<dbReference type="Gene3D" id="3.40.50.10490">
    <property type="entry name" value="Glucose-6-phosphate isomerase like protein, domain 1"/>
    <property type="match status" value="1"/>
</dbReference>
<dbReference type="HAMAP" id="MF_00068">
    <property type="entry name" value="MurQ"/>
    <property type="match status" value="1"/>
</dbReference>
<dbReference type="InterPro" id="IPR005488">
    <property type="entry name" value="Etherase_MurQ"/>
</dbReference>
<dbReference type="InterPro" id="IPR005486">
    <property type="entry name" value="Glucokinase_regulatory_CS"/>
</dbReference>
<dbReference type="InterPro" id="IPR040190">
    <property type="entry name" value="MURQ/GCKR"/>
</dbReference>
<dbReference type="InterPro" id="IPR001347">
    <property type="entry name" value="SIS_dom"/>
</dbReference>
<dbReference type="InterPro" id="IPR046348">
    <property type="entry name" value="SIS_dom_sf"/>
</dbReference>
<dbReference type="NCBIfam" id="TIGR00274">
    <property type="entry name" value="N-acetylmuramic acid 6-phosphate etherase"/>
    <property type="match status" value="1"/>
</dbReference>
<dbReference type="NCBIfam" id="NF003915">
    <property type="entry name" value="PRK05441.1"/>
    <property type="match status" value="1"/>
</dbReference>
<dbReference type="NCBIfam" id="NF009222">
    <property type="entry name" value="PRK12570.1"/>
    <property type="match status" value="1"/>
</dbReference>
<dbReference type="PANTHER" id="PTHR10088">
    <property type="entry name" value="GLUCOKINASE REGULATORY PROTEIN"/>
    <property type="match status" value="1"/>
</dbReference>
<dbReference type="PANTHER" id="PTHR10088:SF4">
    <property type="entry name" value="GLUCOKINASE REGULATORY PROTEIN"/>
    <property type="match status" value="1"/>
</dbReference>
<dbReference type="Pfam" id="PF22645">
    <property type="entry name" value="GKRP_SIS_N"/>
    <property type="match status" value="1"/>
</dbReference>
<dbReference type="SUPFAM" id="SSF53697">
    <property type="entry name" value="SIS domain"/>
    <property type="match status" value="1"/>
</dbReference>
<dbReference type="PROSITE" id="PS01272">
    <property type="entry name" value="GCKR"/>
    <property type="match status" value="1"/>
</dbReference>
<dbReference type="PROSITE" id="PS51464">
    <property type="entry name" value="SIS"/>
    <property type="match status" value="1"/>
</dbReference>
<sequence length="298" mass="31118">MTIDLSSMITETRNPASVEIDQLPTLEMLRVINQEDQQVALAVSQLLPEITRAVDAIAAAFGKGGRLVYIGAGTSGRLGILDASECPPTYGVSAEQVVGLIAGGHKAILQAVENAEDDAELGAQDLKNIQFCANDVLVGIAASGRTPYVLGAMAHARAVGATVCSISCNPGSPLAQAADISMVAVVGPEIVTGSSRMKAGTAQKLILNMLSTGAMIRTGKVYGNLMVDVEATNAKLVERQKRIVMEATDCERAVAERALAQADNHCKTAIVMILAGLTADEARTRLQSSNGFISQCTH</sequence>
<proteinExistence type="inferred from homology"/>
<comment type="function">
    <text evidence="1">Specifically catalyzes the cleavage of the D-lactyl ether substituent of MurNAc 6-phosphate, producing GlcNAc 6-phosphate and D-lactate. Together with AnmK, is also required for the utilization of anhydro-N-acetylmuramic acid (anhMurNAc) either imported from the medium or derived from its own cell wall murein, and thus plays a role in cell wall recycling.</text>
</comment>
<comment type="catalytic activity">
    <reaction evidence="1">
        <text>N-acetyl-D-muramate 6-phosphate + H2O = N-acetyl-D-glucosamine 6-phosphate + (R)-lactate</text>
        <dbReference type="Rhea" id="RHEA:26410"/>
        <dbReference type="ChEBI" id="CHEBI:15377"/>
        <dbReference type="ChEBI" id="CHEBI:16004"/>
        <dbReference type="ChEBI" id="CHEBI:57513"/>
        <dbReference type="ChEBI" id="CHEBI:58722"/>
        <dbReference type="EC" id="4.2.1.126"/>
    </reaction>
</comment>
<comment type="pathway">
    <text evidence="1">Amino-sugar metabolism; 1,6-anhydro-N-acetylmuramate degradation.</text>
</comment>
<comment type="pathway">
    <text evidence="1">Amino-sugar metabolism; N-acetylmuramate degradation.</text>
</comment>
<comment type="pathway">
    <text evidence="1">Cell wall biogenesis; peptidoglycan recycling.</text>
</comment>
<comment type="subunit">
    <text evidence="1">Homodimer.</text>
</comment>
<comment type="miscellaneous">
    <text evidence="1">A lyase-type mechanism (elimination/hydration) is suggested for the cleavage of the lactyl ether bond of MurNAc 6-phosphate, with the formation of an alpha,beta-unsaturated aldehyde intermediate with (E)-stereochemistry, followed by the syn addition of water to give product.</text>
</comment>
<comment type="similarity">
    <text evidence="1">Belongs to the GCKR-like family. MurNAc-6-P etherase subfamily.</text>
</comment>
<protein>
    <recommendedName>
        <fullName evidence="1">N-acetylmuramic acid 6-phosphate etherase</fullName>
        <shortName evidence="1">MurNAc-6-P etherase</shortName>
        <ecNumber evidence="1">4.2.1.126</ecNumber>
    </recommendedName>
    <alternativeName>
        <fullName evidence="1">N-acetylmuramic acid 6-phosphate hydrolase</fullName>
    </alternativeName>
    <alternativeName>
        <fullName evidence="1">N-acetylmuramic acid 6-phosphate lyase</fullName>
    </alternativeName>
</protein>
<name>MURQ_AERHH</name>
<feature type="chain" id="PRO_1000009108" description="N-acetylmuramic acid 6-phosphate etherase">
    <location>
        <begin position="1"/>
        <end position="298"/>
    </location>
</feature>
<feature type="domain" description="SIS" evidence="1">
    <location>
        <begin position="57"/>
        <end position="220"/>
    </location>
</feature>
<feature type="active site" description="Proton donor" evidence="1">
    <location>
        <position position="85"/>
    </location>
</feature>
<feature type="active site" evidence="1">
    <location>
        <position position="116"/>
    </location>
</feature>
<evidence type="ECO:0000255" key="1">
    <source>
        <dbReference type="HAMAP-Rule" id="MF_00068"/>
    </source>
</evidence>
<keyword id="KW-0119">Carbohydrate metabolism</keyword>
<keyword id="KW-0456">Lyase</keyword>
<keyword id="KW-1185">Reference proteome</keyword>
<organism>
    <name type="scientific">Aeromonas hydrophila subsp. hydrophila (strain ATCC 7966 / DSM 30187 / BCRC 13018 / CCUG 14551 / JCM 1027 / KCTC 2358 / NCIMB 9240 / NCTC 8049)</name>
    <dbReference type="NCBI Taxonomy" id="380703"/>
    <lineage>
        <taxon>Bacteria</taxon>
        <taxon>Pseudomonadati</taxon>
        <taxon>Pseudomonadota</taxon>
        <taxon>Gammaproteobacteria</taxon>
        <taxon>Aeromonadales</taxon>
        <taxon>Aeromonadaceae</taxon>
        <taxon>Aeromonas</taxon>
    </lineage>
</organism>